<comment type="function">
    <text evidence="1">Component of the proteasome core, a large protease complex with broad specificity involved in protein degradation.</text>
</comment>
<comment type="activity regulation">
    <text evidence="1">The formation of the proteasomal ATPase ARC-20S proteasome complex, likely via the docking of the C-termini of ARC into the intersubunit pockets in the alpha-rings, may trigger opening of the gate for substrate entry. Interconversion between the open-gate and close-gate conformations leads to a dynamic regulation of the 20S proteasome proteolysis activity.</text>
</comment>
<comment type="pathway">
    <text evidence="1">Protein degradation; proteasomal Pup-dependent pathway.</text>
</comment>
<comment type="subunit">
    <text evidence="1">The 20S proteasome core is composed of 14 alpha and 14 beta subunits that assemble into four stacked heptameric rings, resulting in a barrel-shaped structure. The two inner rings, each composed of seven catalytic beta subunits, are sandwiched by two outer rings, each composed of seven alpha subunits. The catalytic chamber with the active sites is on the inside of the barrel. Has a gated structure, the ends of the cylinder being occluded by the N-termini of the alpha-subunits. Is capped by the proteasome-associated ATPase, ARC.</text>
</comment>
<comment type="subcellular location">
    <subcellularLocation>
        <location evidence="1">Cytoplasm</location>
    </subcellularLocation>
</comment>
<comment type="similarity">
    <text evidence="1">Belongs to the peptidase T1A family.</text>
</comment>
<protein>
    <recommendedName>
        <fullName evidence="1">Proteasome subunit alpha</fullName>
    </recommendedName>
    <alternativeName>
        <fullName evidence="1">20S proteasome alpha subunit</fullName>
    </alternativeName>
    <alternativeName>
        <fullName evidence="1">Proteasome core protein PrcA</fullName>
    </alternativeName>
</protein>
<dbReference type="EMBL" id="U00017">
    <property type="protein sequence ID" value="AAA17205.1"/>
    <property type="molecule type" value="Genomic_DNA"/>
</dbReference>
<dbReference type="EMBL" id="AL035310">
    <property type="protein sequence ID" value="CAA22934.1"/>
    <property type="molecule type" value="Genomic_DNA"/>
</dbReference>
<dbReference type="EMBL" id="AL583921">
    <property type="protein sequence ID" value="CAC31704.1"/>
    <property type="molecule type" value="Genomic_DNA"/>
</dbReference>
<dbReference type="PIR" id="E87074">
    <property type="entry name" value="E87074"/>
</dbReference>
<dbReference type="PIR" id="S72865">
    <property type="entry name" value="S72865"/>
</dbReference>
<dbReference type="RefSeq" id="NP_301951.1">
    <property type="nucleotide sequence ID" value="NC_002677.1"/>
</dbReference>
<dbReference type="RefSeq" id="WP_010908272.1">
    <property type="nucleotide sequence ID" value="NC_002677.1"/>
</dbReference>
<dbReference type="SMR" id="Q9S375"/>
<dbReference type="STRING" id="272631.gene:17575157"/>
<dbReference type="MEROPS" id="T01.980"/>
<dbReference type="KEGG" id="mle:ML1323"/>
<dbReference type="PATRIC" id="fig|272631.5.peg.2440"/>
<dbReference type="Leproma" id="ML1323"/>
<dbReference type="eggNOG" id="COG0638">
    <property type="taxonomic scope" value="Bacteria"/>
</dbReference>
<dbReference type="HOGENOM" id="CLU_071031_0_0_11"/>
<dbReference type="OrthoDB" id="9775643at2"/>
<dbReference type="UniPathway" id="UPA00997"/>
<dbReference type="Proteomes" id="UP000000806">
    <property type="component" value="Chromosome"/>
</dbReference>
<dbReference type="GO" id="GO:0005737">
    <property type="term" value="C:cytoplasm"/>
    <property type="evidence" value="ECO:0007669"/>
    <property type="project" value="UniProtKB-SubCell"/>
</dbReference>
<dbReference type="GO" id="GO:0019773">
    <property type="term" value="C:proteasome core complex, alpha-subunit complex"/>
    <property type="evidence" value="ECO:0007669"/>
    <property type="project" value="UniProtKB-UniRule"/>
</dbReference>
<dbReference type="GO" id="GO:0004298">
    <property type="term" value="F:threonine-type endopeptidase activity"/>
    <property type="evidence" value="ECO:0007669"/>
    <property type="project" value="InterPro"/>
</dbReference>
<dbReference type="GO" id="GO:0019941">
    <property type="term" value="P:modification-dependent protein catabolic process"/>
    <property type="evidence" value="ECO:0007669"/>
    <property type="project" value="UniProtKB-UniRule"/>
</dbReference>
<dbReference type="GO" id="GO:0010498">
    <property type="term" value="P:proteasomal protein catabolic process"/>
    <property type="evidence" value="ECO:0007669"/>
    <property type="project" value="UniProtKB-UniRule"/>
</dbReference>
<dbReference type="CDD" id="cd01906">
    <property type="entry name" value="proteasome_protease_HslV"/>
    <property type="match status" value="1"/>
</dbReference>
<dbReference type="FunFam" id="3.60.20.10:FF:000023">
    <property type="entry name" value="Proteasome subunit alpha"/>
    <property type="match status" value="1"/>
</dbReference>
<dbReference type="Gene3D" id="3.60.20.10">
    <property type="entry name" value="Glutamine Phosphoribosylpyrophosphate, subunit 1, domain 1"/>
    <property type="match status" value="1"/>
</dbReference>
<dbReference type="HAMAP" id="MF_00289_B">
    <property type="entry name" value="Proteasome_A_B"/>
    <property type="match status" value="1"/>
</dbReference>
<dbReference type="InterPro" id="IPR029055">
    <property type="entry name" value="Ntn_hydrolases_N"/>
</dbReference>
<dbReference type="InterPro" id="IPR050115">
    <property type="entry name" value="Proteasome_alpha"/>
</dbReference>
<dbReference type="InterPro" id="IPR023332">
    <property type="entry name" value="Proteasome_alpha-type"/>
</dbReference>
<dbReference type="InterPro" id="IPR022296">
    <property type="entry name" value="Proteasome_asu_bac"/>
</dbReference>
<dbReference type="InterPro" id="IPR001353">
    <property type="entry name" value="Proteasome_sua/b"/>
</dbReference>
<dbReference type="NCBIfam" id="TIGR03691">
    <property type="entry name" value="20S_bact_alpha"/>
    <property type="match status" value="1"/>
</dbReference>
<dbReference type="PANTHER" id="PTHR11599">
    <property type="entry name" value="PROTEASOME SUBUNIT ALPHA/BETA"/>
    <property type="match status" value="1"/>
</dbReference>
<dbReference type="Pfam" id="PF00227">
    <property type="entry name" value="Proteasome"/>
    <property type="match status" value="1"/>
</dbReference>
<dbReference type="SUPFAM" id="SSF56235">
    <property type="entry name" value="N-terminal nucleophile aminohydrolases (Ntn hydrolases)"/>
    <property type="match status" value="1"/>
</dbReference>
<dbReference type="PROSITE" id="PS51475">
    <property type="entry name" value="PROTEASOME_ALPHA_2"/>
    <property type="match status" value="1"/>
</dbReference>
<keyword id="KW-0963">Cytoplasm</keyword>
<keyword id="KW-0647">Proteasome</keyword>
<keyword id="KW-1185">Reference proteome</keyword>
<proteinExistence type="inferred from homology"/>
<name>PSA_MYCLE</name>
<gene>
    <name evidence="1" type="primary">prcA</name>
    <name type="ordered locus">ML1323</name>
    <name type="ORF">B2126_C3_260</name>
</gene>
<feature type="chain" id="PRO_0000397151" description="Proteasome subunit alpha">
    <location>
        <begin position="1"/>
        <end position="265"/>
    </location>
</feature>
<feature type="region of interest" description="Disordered" evidence="2">
    <location>
        <begin position="236"/>
        <end position="265"/>
    </location>
</feature>
<feature type="sequence conflict" description="In Ref. 1; AAA17205." evidence="3" ref="1">
    <original>RS</original>
    <variation>QR</variation>
    <location>
        <begin position="16"/>
        <end position="17"/>
    </location>
</feature>
<sequence>MSFPYFISPEQAMRERSELARKGIARGRSVVALAYAGGVLFVAENPSRSLQKISELYDRVGFAAAGKFNEFDNLRRGGIQFADTRGYAYDRRDVTGRQLANVYAQTLGTIFTEQAKPYEVELCVAEVAHYGETKPPELYRITYDGSINDEPHFMVMGGTTESIANALKESYAENASLTDALGIAVAALRAGSADAAGSDQPTLGVASLEVAVLDANRPRRAFRRIIGSGLEALLREKDSKGSKGAQNPKGARDSKNSKSYGESTD</sequence>
<reference key="1">
    <citation type="submission" date="1994-03" db="EMBL/GenBank/DDBJ databases">
        <authorList>
            <person name="Smith D.R."/>
            <person name="Robison K."/>
        </authorList>
    </citation>
    <scope>NUCLEOTIDE SEQUENCE [GENOMIC DNA]</scope>
</reference>
<reference key="2">
    <citation type="journal article" date="2001" name="Nature">
        <title>Massive gene decay in the leprosy bacillus.</title>
        <authorList>
            <person name="Cole S.T."/>
            <person name="Eiglmeier K."/>
            <person name="Parkhill J."/>
            <person name="James K.D."/>
            <person name="Thomson N.R."/>
            <person name="Wheeler P.R."/>
            <person name="Honore N."/>
            <person name="Garnier T."/>
            <person name="Churcher C.M."/>
            <person name="Harris D.E."/>
            <person name="Mungall K.L."/>
            <person name="Basham D."/>
            <person name="Brown D."/>
            <person name="Chillingworth T."/>
            <person name="Connor R."/>
            <person name="Davies R.M."/>
            <person name="Devlin K."/>
            <person name="Duthoy S."/>
            <person name="Feltwell T."/>
            <person name="Fraser A."/>
            <person name="Hamlin N."/>
            <person name="Holroyd S."/>
            <person name="Hornsby T."/>
            <person name="Jagels K."/>
            <person name="Lacroix C."/>
            <person name="Maclean J."/>
            <person name="Moule S."/>
            <person name="Murphy L.D."/>
            <person name="Oliver K."/>
            <person name="Quail M.A."/>
            <person name="Rajandream M.A."/>
            <person name="Rutherford K.M."/>
            <person name="Rutter S."/>
            <person name="Seeger K."/>
            <person name="Simon S."/>
            <person name="Simmonds M."/>
            <person name="Skelton J."/>
            <person name="Squares R."/>
            <person name="Squares S."/>
            <person name="Stevens K."/>
            <person name="Taylor K."/>
            <person name="Whitehead S."/>
            <person name="Woodward J.R."/>
            <person name="Barrell B.G."/>
        </authorList>
    </citation>
    <scope>NUCLEOTIDE SEQUENCE [LARGE SCALE GENOMIC DNA]</scope>
    <source>
        <strain>TN</strain>
    </source>
</reference>
<organism>
    <name type="scientific">Mycobacterium leprae (strain TN)</name>
    <dbReference type="NCBI Taxonomy" id="272631"/>
    <lineage>
        <taxon>Bacteria</taxon>
        <taxon>Bacillati</taxon>
        <taxon>Actinomycetota</taxon>
        <taxon>Actinomycetes</taxon>
        <taxon>Mycobacteriales</taxon>
        <taxon>Mycobacteriaceae</taxon>
        <taxon>Mycobacterium</taxon>
    </lineage>
</organism>
<accession>Q9S375</accession>
<accession>Q49792</accession>
<evidence type="ECO:0000255" key="1">
    <source>
        <dbReference type="HAMAP-Rule" id="MF_00289"/>
    </source>
</evidence>
<evidence type="ECO:0000256" key="2">
    <source>
        <dbReference type="SAM" id="MobiDB-lite"/>
    </source>
</evidence>
<evidence type="ECO:0000305" key="3"/>